<feature type="chain" id="PRO_0000384541" description="Putative transmembrane protein ORF63">
    <location>
        <begin position="1"/>
        <end position="63"/>
    </location>
</feature>
<feature type="topological domain" description="Extracellular" evidence="1">
    <location>
        <begin position="1"/>
        <end position="8"/>
    </location>
</feature>
<feature type="transmembrane region" description="Helical" evidence="1">
    <location>
        <begin position="9"/>
        <end position="29"/>
    </location>
</feature>
<feature type="topological domain" description="Cytoplasmic" evidence="1">
    <location>
        <begin position="30"/>
        <end position="31"/>
    </location>
</feature>
<feature type="transmembrane region" description="Helical" evidence="1">
    <location>
        <begin position="32"/>
        <end position="52"/>
    </location>
</feature>
<feature type="topological domain" description="Extracellular" evidence="1">
    <location>
        <begin position="53"/>
        <end position="63"/>
    </location>
</feature>
<comment type="subcellular location">
    <subcellularLocation>
        <location evidence="2">Host membrane</location>
        <topology evidence="2">Multi-pass membrane protein</topology>
    </subcellularLocation>
</comment>
<organism>
    <name type="scientific">Acidianus filamentous virus 1 (isolate United States/Yellowstone)</name>
    <name type="common">AFV-1</name>
    <dbReference type="NCBI Taxonomy" id="654909"/>
    <lineage>
        <taxon>Viruses</taxon>
        <taxon>Adnaviria</taxon>
        <taxon>Zilligvirae</taxon>
        <taxon>Taleaviricota</taxon>
        <taxon>Tokiviricetes</taxon>
        <taxon>Ligamenvirales</taxon>
        <taxon>Ungulaviridae</taxon>
        <taxon>Captovirus</taxon>
        <taxon>Acidianus filamentous virus 1</taxon>
    </lineage>
</organism>
<evidence type="ECO:0000255" key="1"/>
<evidence type="ECO:0000305" key="2"/>
<dbReference type="EMBL" id="AJ567472">
    <property type="protein sequence ID" value="CAD98967.1"/>
    <property type="molecule type" value="Genomic_DNA"/>
</dbReference>
<dbReference type="RefSeq" id="YP_003763.1">
    <property type="nucleotide sequence ID" value="NC_005830.1"/>
</dbReference>
<dbReference type="SMR" id="Q70LB3"/>
<dbReference type="KEGG" id="vg:2769164"/>
<dbReference type="Proteomes" id="UP000000514">
    <property type="component" value="Genome"/>
</dbReference>
<dbReference type="GO" id="GO:0033644">
    <property type="term" value="C:host cell membrane"/>
    <property type="evidence" value="ECO:0007669"/>
    <property type="project" value="UniProtKB-SubCell"/>
</dbReference>
<dbReference type="GO" id="GO:0016020">
    <property type="term" value="C:membrane"/>
    <property type="evidence" value="ECO:0007669"/>
    <property type="project" value="UniProtKB-KW"/>
</dbReference>
<reference key="1">
    <citation type="journal article" date="2003" name="Virology">
        <title>AFV1, a novel virus infecting hyperthermophilic archaea of the genus acidianus.</title>
        <authorList>
            <person name="Bettstetter M."/>
            <person name="Peng X."/>
            <person name="Garrett R.A."/>
            <person name="Prangishvili D."/>
        </authorList>
    </citation>
    <scope>NUCLEOTIDE SEQUENCE [GENOMIC DNA]</scope>
</reference>
<proteinExistence type="predicted"/>
<accession>Q70LB3</accession>
<protein>
    <recommendedName>
        <fullName>Putative transmembrane protein ORF63</fullName>
    </recommendedName>
</protein>
<gene>
    <name type="ORF">ORF63</name>
</gene>
<keyword id="KW-1043">Host membrane</keyword>
<keyword id="KW-0472">Membrane</keyword>
<keyword id="KW-1185">Reference proteome</keyword>
<keyword id="KW-0812">Transmembrane</keyword>
<keyword id="KW-1133">Transmembrane helix</keyword>
<name>Y063_AFV1Y</name>
<organismHost>
    <name type="scientific">Acidianus hospitalis</name>
    <dbReference type="NCBI Taxonomy" id="563177"/>
</organismHost>
<organismHost>
    <name type="scientific">Acidianus infernus</name>
    <dbReference type="NCBI Taxonomy" id="12915"/>
</organismHost>
<sequence>MQSGNFTLEVIMYLINSILAFIMIFFTFVNPSLLKCQYWTYILVALITAIIFHTGSKVGKSSG</sequence>